<protein>
    <recommendedName>
        <fullName evidence="1">Enolase-phosphatase E1</fullName>
        <ecNumber evidence="1">3.1.3.77</ecNumber>
    </recommendedName>
    <alternativeName>
        <fullName evidence="1">2,3-diketo-5-methylthio-1-phosphopentane phosphatase</fullName>
    </alternativeName>
</protein>
<feature type="chain" id="PRO_0000357435" description="Enolase-phosphatase E1">
    <location>
        <begin position="1"/>
        <end position="232"/>
    </location>
</feature>
<evidence type="ECO:0000255" key="1">
    <source>
        <dbReference type="HAMAP-Rule" id="MF_01681"/>
    </source>
</evidence>
<keyword id="KW-0028">Amino-acid biosynthesis</keyword>
<keyword id="KW-0378">Hydrolase</keyword>
<keyword id="KW-0460">Magnesium</keyword>
<keyword id="KW-0479">Metal-binding</keyword>
<keyword id="KW-0486">Methionine biosynthesis</keyword>
<dbReference type="EC" id="3.1.3.77" evidence="1"/>
<dbReference type="EMBL" id="AE003849">
    <property type="protein sequence ID" value="AAF85010.1"/>
    <property type="molecule type" value="Genomic_DNA"/>
</dbReference>
<dbReference type="PIR" id="G82587">
    <property type="entry name" value="G82587"/>
</dbReference>
<dbReference type="RefSeq" id="WP_010894659.1">
    <property type="nucleotide sequence ID" value="NC_002488.3"/>
</dbReference>
<dbReference type="SMR" id="Q9PBD3"/>
<dbReference type="STRING" id="160492.XF_2211"/>
<dbReference type="KEGG" id="xfa:XF_2211"/>
<dbReference type="eggNOG" id="COG4229">
    <property type="taxonomic scope" value="Bacteria"/>
</dbReference>
<dbReference type="HOGENOM" id="CLU_023273_0_0_6"/>
<dbReference type="UniPathway" id="UPA00904">
    <property type="reaction ID" value="UER00876"/>
</dbReference>
<dbReference type="UniPathway" id="UPA00904">
    <property type="reaction ID" value="UER00877"/>
</dbReference>
<dbReference type="Proteomes" id="UP000000812">
    <property type="component" value="Chromosome"/>
</dbReference>
<dbReference type="GO" id="GO:0043715">
    <property type="term" value="F:2,3-diketo-5-methylthiopentyl-1-phosphate enolase activity"/>
    <property type="evidence" value="ECO:0007669"/>
    <property type="project" value="UniProtKB-UniRule"/>
</dbReference>
<dbReference type="GO" id="GO:0043716">
    <property type="term" value="F:2-hydroxy-3-keto-5-methylthiopentenyl-1-phosphate phosphatase activity"/>
    <property type="evidence" value="ECO:0007669"/>
    <property type="project" value="UniProtKB-UniRule"/>
</dbReference>
<dbReference type="GO" id="GO:0043874">
    <property type="term" value="F:acireductone synthase activity"/>
    <property type="evidence" value="ECO:0007669"/>
    <property type="project" value="UniProtKB-EC"/>
</dbReference>
<dbReference type="GO" id="GO:0000287">
    <property type="term" value="F:magnesium ion binding"/>
    <property type="evidence" value="ECO:0007669"/>
    <property type="project" value="UniProtKB-UniRule"/>
</dbReference>
<dbReference type="GO" id="GO:0019509">
    <property type="term" value="P:L-methionine salvage from methylthioadenosine"/>
    <property type="evidence" value="ECO:0007669"/>
    <property type="project" value="UniProtKB-UniRule"/>
</dbReference>
<dbReference type="CDD" id="cd01629">
    <property type="entry name" value="HAD_EP"/>
    <property type="match status" value="1"/>
</dbReference>
<dbReference type="Gene3D" id="1.10.720.60">
    <property type="match status" value="1"/>
</dbReference>
<dbReference type="Gene3D" id="3.40.50.1000">
    <property type="entry name" value="HAD superfamily/HAD-like"/>
    <property type="match status" value="1"/>
</dbReference>
<dbReference type="HAMAP" id="MF_01681">
    <property type="entry name" value="Salvage_MtnC"/>
    <property type="match status" value="1"/>
</dbReference>
<dbReference type="InterPro" id="IPR023943">
    <property type="entry name" value="Enolase-ppase_E1"/>
</dbReference>
<dbReference type="InterPro" id="IPR036412">
    <property type="entry name" value="HAD-like_sf"/>
</dbReference>
<dbReference type="InterPro" id="IPR006439">
    <property type="entry name" value="HAD-SF_hydro_IA"/>
</dbReference>
<dbReference type="InterPro" id="IPR023214">
    <property type="entry name" value="HAD_sf"/>
</dbReference>
<dbReference type="NCBIfam" id="TIGR01691">
    <property type="entry name" value="enolase-ppase"/>
    <property type="match status" value="1"/>
</dbReference>
<dbReference type="NCBIfam" id="TIGR01549">
    <property type="entry name" value="HAD-SF-IA-v1"/>
    <property type="match status" value="1"/>
</dbReference>
<dbReference type="PANTHER" id="PTHR20371">
    <property type="entry name" value="ENOLASE-PHOSPHATASE E1"/>
    <property type="match status" value="1"/>
</dbReference>
<dbReference type="PANTHER" id="PTHR20371:SF1">
    <property type="entry name" value="ENOLASE-PHOSPHATASE E1"/>
    <property type="match status" value="1"/>
</dbReference>
<dbReference type="Pfam" id="PF00702">
    <property type="entry name" value="Hydrolase"/>
    <property type="match status" value="1"/>
</dbReference>
<dbReference type="SFLD" id="SFLDG01129">
    <property type="entry name" value="C1.5:_HAD__Beta-PGM__Phosphata"/>
    <property type="match status" value="1"/>
</dbReference>
<dbReference type="SFLD" id="SFLDF00044">
    <property type="entry name" value="enolase-phosphatase"/>
    <property type="match status" value="1"/>
</dbReference>
<dbReference type="SUPFAM" id="SSF56784">
    <property type="entry name" value="HAD-like"/>
    <property type="match status" value="1"/>
</dbReference>
<organism>
    <name type="scientific">Xylella fastidiosa (strain 9a5c)</name>
    <dbReference type="NCBI Taxonomy" id="160492"/>
    <lineage>
        <taxon>Bacteria</taxon>
        <taxon>Pseudomonadati</taxon>
        <taxon>Pseudomonadota</taxon>
        <taxon>Gammaproteobacteria</taxon>
        <taxon>Lysobacterales</taxon>
        <taxon>Lysobacteraceae</taxon>
        <taxon>Xylella</taxon>
    </lineage>
</organism>
<gene>
    <name evidence="1" type="primary">mtnC</name>
    <name type="ordered locus">XF_2211</name>
</gene>
<proteinExistence type="inferred from homology"/>
<reference key="1">
    <citation type="journal article" date="2000" name="Nature">
        <title>The genome sequence of the plant pathogen Xylella fastidiosa.</title>
        <authorList>
            <person name="Simpson A.J.G."/>
            <person name="Reinach F.C."/>
            <person name="Arruda P."/>
            <person name="Abreu F.A."/>
            <person name="Acencio M."/>
            <person name="Alvarenga R."/>
            <person name="Alves L.M.C."/>
            <person name="Araya J.E."/>
            <person name="Baia G.S."/>
            <person name="Baptista C.S."/>
            <person name="Barros M.H."/>
            <person name="Bonaccorsi E.D."/>
            <person name="Bordin S."/>
            <person name="Bove J.M."/>
            <person name="Briones M.R.S."/>
            <person name="Bueno M.R.P."/>
            <person name="Camargo A.A."/>
            <person name="Camargo L.E.A."/>
            <person name="Carraro D.M."/>
            <person name="Carrer H."/>
            <person name="Colauto N.B."/>
            <person name="Colombo C."/>
            <person name="Costa F.F."/>
            <person name="Costa M.C.R."/>
            <person name="Costa-Neto C.M."/>
            <person name="Coutinho L.L."/>
            <person name="Cristofani M."/>
            <person name="Dias-Neto E."/>
            <person name="Docena C."/>
            <person name="El-Dorry H."/>
            <person name="Facincani A.P."/>
            <person name="Ferreira A.J.S."/>
            <person name="Ferreira V.C.A."/>
            <person name="Ferro J.A."/>
            <person name="Fraga J.S."/>
            <person name="Franca S.C."/>
            <person name="Franco M.C."/>
            <person name="Frohme M."/>
            <person name="Furlan L.R."/>
            <person name="Garnier M."/>
            <person name="Goldman G.H."/>
            <person name="Goldman M.H.S."/>
            <person name="Gomes S.L."/>
            <person name="Gruber A."/>
            <person name="Ho P.L."/>
            <person name="Hoheisel J.D."/>
            <person name="Junqueira M.L."/>
            <person name="Kemper E.L."/>
            <person name="Kitajima J.P."/>
            <person name="Krieger J.E."/>
            <person name="Kuramae E.E."/>
            <person name="Laigret F."/>
            <person name="Lambais M.R."/>
            <person name="Leite L.C.C."/>
            <person name="Lemos E.G.M."/>
            <person name="Lemos M.V.F."/>
            <person name="Lopes S.A."/>
            <person name="Lopes C.R."/>
            <person name="Machado J.A."/>
            <person name="Machado M.A."/>
            <person name="Madeira A.M.B.N."/>
            <person name="Madeira H.M.F."/>
            <person name="Marino C.L."/>
            <person name="Marques M.V."/>
            <person name="Martins E.A.L."/>
            <person name="Martins E.M.F."/>
            <person name="Matsukuma A.Y."/>
            <person name="Menck C.F.M."/>
            <person name="Miracca E.C."/>
            <person name="Miyaki C.Y."/>
            <person name="Monteiro-Vitorello C.B."/>
            <person name="Moon D.H."/>
            <person name="Nagai M.A."/>
            <person name="Nascimento A.L.T.O."/>
            <person name="Netto L.E.S."/>
            <person name="Nhani A. Jr."/>
            <person name="Nobrega F.G."/>
            <person name="Nunes L.R."/>
            <person name="Oliveira M.A."/>
            <person name="de Oliveira M.C."/>
            <person name="de Oliveira R.C."/>
            <person name="Palmieri D.A."/>
            <person name="Paris A."/>
            <person name="Peixoto B.R."/>
            <person name="Pereira G.A.G."/>
            <person name="Pereira H.A. Jr."/>
            <person name="Pesquero J.B."/>
            <person name="Quaggio R.B."/>
            <person name="Roberto P.G."/>
            <person name="Rodrigues V."/>
            <person name="de Rosa A.J.M."/>
            <person name="de Rosa V.E. Jr."/>
            <person name="de Sa R.G."/>
            <person name="Santelli R.V."/>
            <person name="Sawasaki H.E."/>
            <person name="da Silva A.C.R."/>
            <person name="da Silva A.M."/>
            <person name="da Silva F.R."/>
            <person name="Silva W.A. Jr."/>
            <person name="da Silveira J.F."/>
            <person name="Silvestri M.L.Z."/>
            <person name="Siqueira W.J."/>
            <person name="de Souza A.A."/>
            <person name="de Souza A.P."/>
            <person name="Terenzi M.F."/>
            <person name="Truffi D."/>
            <person name="Tsai S.M."/>
            <person name="Tsuhako M.H."/>
            <person name="Vallada H."/>
            <person name="Van Sluys M.A."/>
            <person name="Verjovski-Almeida S."/>
            <person name="Vettore A.L."/>
            <person name="Zago M.A."/>
            <person name="Zatz M."/>
            <person name="Meidanis J."/>
            <person name="Setubal J.C."/>
        </authorList>
    </citation>
    <scope>NUCLEOTIDE SEQUENCE [LARGE SCALE GENOMIC DNA]</scope>
    <source>
        <strain>9a5c</strain>
    </source>
</reference>
<name>MTNC_XYLFA</name>
<sequence>MSMPQAILTDIEGTTSSLSFVKDVLFPYARRALPDFVREHREHPDVMPWLDQVANETGTAFSEEALVATLQTWIDTDSKHTALKALQGMIWASGYQNGDFTAHLYPDAVQRLRAWHAANVPLYVYSSGSVPAQQLFFRHSHAGDLSGLFSGWFDTEIGGKRESTSYQRIAEHIGIAPAGIVFLSDVIEELNAAAQIGLNTVLIDRRDDYPTPRHLKDADHHLHLDSFAQLPF</sequence>
<comment type="function">
    <text evidence="1">Bifunctional enzyme that catalyzes the enolization of 2,3-diketo-5-methylthiopentyl-1-phosphate (DK-MTP-1-P) into the intermediate 2-hydroxy-3-keto-5-methylthiopentenyl-1-phosphate (HK-MTPenyl-1-P), which is then dephosphorylated to form the acireductone 1,2-dihydroxy-3-keto-5-methylthiopentene (DHK-MTPene).</text>
</comment>
<comment type="catalytic activity">
    <reaction evidence="1">
        <text>5-methylsulfanyl-2,3-dioxopentyl phosphate + H2O = 1,2-dihydroxy-5-(methylsulfanyl)pent-1-en-3-one + phosphate</text>
        <dbReference type="Rhea" id="RHEA:21700"/>
        <dbReference type="ChEBI" id="CHEBI:15377"/>
        <dbReference type="ChEBI" id="CHEBI:43474"/>
        <dbReference type="ChEBI" id="CHEBI:49252"/>
        <dbReference type="ChEBI" id="CHEBI:58828"/>
        <dbReference type="EC" id="3.1.3.77"/>
    </reaction>
</comment>
<comment type="cofactor">
    <cofactor evidence="1">
        <name>Mg(2+)</name>
        <dbReference type="ChEBI" id="CHEBI:18420"/>
    </cofactor>
    <text evidence="1">Binds 1 Mg(2+) ion per subunit.</text>
</comment>
<comment type="pathway">
    <text evidence="1">Amino-acid biosynthesis; L-methionine biosynthesis via salvage pathway; L-methionine from S-methyl-5-thio-alpha-D-ribose 1-phosphate: step 3/6.</text>
</comment>
<comment type="pathway">
    <text evidence="1">Amino-acid biosynthesis; L-methionine biosynthesis via salvage pathway; L-methionine from S-methyl-5-thio-alpha-D-ribose 1-phosphate: step 4/6.</text>
</comment>
<comment type="subunit">
    <text evidence="1">Monomer.</text>
</comment>
<comment type="similarity">
    <text evidence="1">Belongs to the HAD-like hydrolase superfamily. MasA/MtnC family.</text>
</comment>
<accession>Q9PBD3</accession>